<comment type="function">
    <text evidence="1">One of the components of the core complex of photosystem II (PSII), required for its stability and/or assembly. PSII is a light-driven water:plastoquinone oxidoreductase that uses light energy to abstract electrons from H(2)O, generating O(2) and a proton gradient subsequently used for ATP formation. It consists of a core antenna complex that captures photons, and an electron transfer chain that converts photonic excitation into a charge separation.</text>
</comment>
<comment type="subunit">
    <text evidence="1">PSII is composed of 1 copy each of membrane proteins PsbA, PsbB, PsbC, PsbD, PsbE, PsbF, PsbH, PsbI, PsbJ, PsbK, PsbL, PsbM, PsbT, PsbX, PsbY, PsbZ, Psb30/Ycf12, at least 3 peripheral proteins of the oxygen-evolving complex and a large number of cofactors. It forms dimeric complexes.</text>
</comment>
<comment type="subcellular location">
    <subcellularLocation>
        <location evidence="1">Plastid</location>
        <location evidence="1">Chloroplast thylakoid membrane</location>
        <topology evidence="1">Single-pass membrane protein</topology>
    </subcellularLocation>
</comment>
<comment type="similarity">
    <text evidence="1">Belongs to the PsbI family.</text>
</comment>
<gene>
    <name evidence="1" type="primary">psbI</name>
    <name type="ORF">PA012</name>
</gene>
<evidence type="ECO:0000255" key="1">
    <source>
        <dbReference type="HAMAP-Rule" id="MF_01316"/>
    </source>
</evidence>
<protein>
    <recommendedName>
        <fullName evidence="1">Photosystem II reaction center protein I</fullName>
        <shortName evidence="1">PSII-I</shortName>
    </recommendedName>
    <alternativeName>
        <fullName evidence="1">PSII 4.8 kDa protein</fullName>
    </alternativeName>
</protein>
<feature type="chain" id="PRO_0000219642" description="Photosystem II reaction center protein I">
    <location>
        <begin position="1"/>
        <end position="36"/>
    </location>
</feature>
<feature type="transmembrane region" description="Helical" evidence="1">
    <location>
        <begin position="4"/>
        <end position="24"/>
    </location>
</feature>
<name>PSBI_ORYSA</name>
<sequence>MLTLKLFVYTVVIFFVSLFIFGFLSNDPGRNPGRDE</sequence>
<reference key="1">
    <citation type="journal article" date="2004" name="Plant Physiol.">
        <title>A comparison of rice chloroplast genomes.</title>
        <authorList>
            <person name="Tang J."/>
            <person name="Xia H."/>
            <person name="Cao M."/>
            <person name="Zhang X."/>
            <person name="Zeng W."/>
            <person name="Hu S."/>
            <person name="Tong W."/>
            <person name="Wang J."/>
            <person name="Wang J."/>
            <person name="Yu J."/>
            <person name="Yang H."/>
            <person name="Zhu L."/>
        </authorList>
    </citation>
    <scope>NUCLEOTIDE SEQUENCE [LARGE SCALE GENOMIC DNA]</scope>
    <source>
        <strain>cv. PA64s</strain>
    </source>
</reference>
<proteinExistence type="inferred from homology"/>
<keyword id="KW-0150">Chloroplast</keyword>
<keyword id="KW-0472">Membrane</keyword>
<keyword id="KW-0602">Photosynthesis</keyword>
<keyword id="KW-0604">Photosystem II</keyword>
<keyword id="KW-0934">Plastid</keyword>
<keyword id="KW-0674">Reaction center</keyword>
<keyword id="KW-0793">Thylakoid</keyword>
<keyword id="KW-0812">Transmembrane</keyword>
<keyword id="KW-1133">Transmembrane helix</keyword>
<geneLocation type="chloroplast"/>
<accession>P0C405</accession>
<accession>P12161</accession>
<accession>Q6QY87</accession>
<accession>Q7G1Q3</accession>
<accession>Q7G7J7</accession>
<organism>
    <name type="scientific">Oryza sativa</name>
    <name type="common">Rice</name>
    <dbReference type="NCBI Taxonomy" id="4530"/>
    <lineage>
        <taxon>Eukaryota</taxon>
        <taxon>Viridiplantae</taxon>
        <taxon>Streptophyta</taxon>
        <taxon>Embryophyta</taxon>
        <taxon>Tracheophyta</taxon>
        <taxon>Spermatophyta</taxon>
        <taxon>Magnoliopsida</taxon>
        <taxon>Liliopsida</taxon>
        <taxon>Poales</taxon>
        <taxon>Poaceae</taxon>
        <taxon>BOP clade</taxon>
        <taxon>Oryzoideae</taxon>
        <taxon>Oryzeae</taxon>
        <taxon>Oryzinae</taxon>
        <taxon>Oryza</taxon>
    </lineage>
</organism>
<dbReference type="EMBL" id="AY522331">
    <property type="protein sequence ID" value="AAS46170.1"/>
    <property type="molecule type" value="Genomic_DNA"/>
</dbReference>
<dbReference type="RefSeq" id="NP_039364.1">
    <property type="nucleotide sequence ID" value="NC_001320.1"/>
</dbReference>
<dbReference type="RefSeq" id="YP_009305288.1">
    <property type="nucleotide sequence ID" value="NC_031333.1"/>
</dbReference>
<dbReference type="SMR" id="P0C405"/>
<dbReference type="GeneID" id="29141334"/>
<dbReference type="GeneID" id="3131416"/>
<dbReference type="KEGG" id="osa:3131416"/>
<dbReference type="GO" id="GO:0009535">
    <property type="term" value="C:chloroplast thylakoid membrane"/>
    <property type="evidence" value="ECO:0007669"/>
    <property type="project" value="UniProtKB-SubCell"/>
</dbReference>
<dbReference type="GO" id="GO:0009539">
    <property type="term" value="C:photosystem II reaction center"/>
    <property type="evidence" value="ECO:0007669"/>
    <property type="project" value="InterPro"/>
</dbReference>
<dbReference type="GO" id="GO:0009536">
    <property type="term" value="C:plastid"/>
    <property type="evidence" value="ECO:0000305"/>
    <property type="project" value="Gramene"/>
</dbReference>
<dbReference type="GO" id="GO:0015979">
    <property type="term" value="P:photosynthesis"/>
    <property type="evidence" value="ECO:0007669"/>
    <property type="project" value="UniProtKB-UniRule"/>
</dbReference>
<dbReference type="HAMAP" id="MF_01316">
    <property type="entry name" value="PSII_PsbI"/>
    <property type="match status" value="1"/>
</dbReference>
<dbReference type="InterPro" id="IPR003686">
    <property type="entry name" value="PSII_PsbI"/>
</dbReference>
<dbReference type="InterPro" id="IPR037271">
    <property type="entry name" value="PSII_PsbI_sf"/>
</dbReference>
<dbReference type="NCBIfam" id="NF002735">
    <property type="entry name" value="PRK02655.1"/>
    <property type="match status" value="1"/>
</dbReference>
<dbReference type="PANTHER" id="PTHR35772">
    <property type="entry name" value="PHOTOSYSTEM II REACTION CENTER PROTEIN I"/>
    <property type="match status" value="1"/>
</dbReference>
<dbReference type="PANTHER" id="PTHR35772:SF1">
    <property type="entry name" value="PHOTOSYSTEM II REACTION CENTER PROTEIN I"/>
    <property type="match status" value="1"/>
</dbReference>
<dbReference type="Pfam" id="PF02532">
    <property type="entry name" value="PsbI"/>
    <property type="match status" value="1"/>
</dbReference>
<dbReference type="SUPFAM" id="SSF161041">
    <property type="entry name" value="Photosystem II reaction center protein I, PsbI"/>
    <property type="match status" value="1"/>
</dbReference>